<feature type="chain" id="PRO_1000047629" description="Glutamate racemase">
    <location>
        <begin position="1"/>
        <end position="264"/>
    </location>
</feature>
<feature type="active site" description="Proton donor/acceptor" evidence="1">
    <location>
        <position position="73"/>
    </location>
</feature>
<feature type="active site" description="Proton donor/acceptor" evidence="1">
    <location>
        <position position="183"/>
    </location>
</feature>
<feature type="binding site" evidence="1">
    <location>
        <begin position="10"/>
        <end position="11"/>
    </location>
    <ligand>
        <name>substrate</name>
    </ligand>
</feature>
<feature type="binding site" evidence="1">
    <location>
        <begin position="42"/>
        <end position="43"/>
    </location>
    <ligand>
        <name>substrate</name>
    </ligand>
</feature>
<feature type="binding site" evidence="1">
    <location>
        <begin position="74"/>
        <end position="75"/>
    </location>
    <ligand>
        <name>substrate</name>
    </ligand>
</feature>
<feature type="binding site" evidence="1">
    <location>
        <begin position="184"/>
        <end position="185"/>
    </location>
    <ligand>
        <name>substrate</name>
    </ligand>
</feature>
<sequence length="264" mass="29344">MDNRPIGFLDSGVGGLTVVRELMRQLPHEEVIYIGDSARAPYGPRPAEQIRAYTWQLVNFLLTKDVKMIVIACNTATAVVWEEVKEKLDIPVLGVILPGASAAIKSTASGRIGVIGTPMTVSSDIYRQKIEALSPEMQVESLACPKFVPLVESNELHSSLTKKVVYETLQPLAGRVDTLVLGCTHYPLLRPIIQNRMGPDVKLIDSGAECVRDISVLLNYFEINRSREKQELNHQFYTTANAKSFSEIAESWLRLKVNVEHVSL</sequence>
<gene>
    <name evidence="1" type="primary">murI</name>
    <name type="ordered locus">SSA_1784</name>
</gene>
<accession>A3CPR2</accession>
<protein>
    <recommendedName>
        <fullName evidence="1">Glutamate racemase</fullName>
        <ecNumber evidence="1">5.1.1.3</ecNumber>
    </recommendedName>
</protein>
<keyword id="KW-0133">Cell shape</keyword>
<keyword id="KW-0961">Cell wall biogenesis/degradation</keyword>
<keyword id="KW-0413">Isomerase</keyword>
<keyword id="KW-0573">Peptidoglycan synthesis</keyword>
<keyword id="KW-1185">Reference proteome</keyword>
<proteinExistence type="inferred from homology"/>
<name>MURI_STRSV</name>
<comment type="function">
    <text evidence="1">Provides the (R)-glutamate required for cell wall biosynthesis.</text>
</comment>
<comment type="catalytic activity">
    <reaction evidence="1">
        <text>L-glutamate = D-glutamate</text>
        <dbReference type="Rhea" id="RHEA:12813"/>
        <dbReference type="ChEBI" id="CHEBI:29985"/>
        <dbReference type="ChEBI" id="CHEBI:29986"/>
        <dbReference type="EC" id="5.1.1.3"/>
    </reaction>
</comment>
<comment type="pathway">
    <text evidence="1">Cell wall biogenesis; peptidoglycan biosynthesis.</text>
</comment>
<comment type="similarity">
    <text evidence="1">Belongs to the aspartate/glutamate racemases family.</text>
</comment>
<evidence type="ECO:0000255" key="1">
    <source>
        <dbReference type="HAMAP-Rule" id="MF_00258"/>
    </source>
</evidence>
<dbReference type="EC" id="5.1.1.3" evidence="1"/>
<dbReference type="EMBL" id="CP000387">
    <property type="protein sequence ID" value="ABN45167.1"/>
    <property type="molecule type" value="Genomic_DNA"/>
</dbReference>
<dbReference type="RefSeq" id="WP_011837360.1">
    <property type="nucleotide sequence ID" value="NC_009009.1"/>
</dbReference>
<dbReference type="RefSeq" id="YP_001035717.1">
    <property type="nucleotide sequence ID" value="NC_009009.1"/>
</dbReference>
<dbReference type="SMR" id="A3CPR2"/>
<dbReference type="STRING" id="388919.SSA_1784"/>
<dbReference type="KEGG" id="ssa:SSA_1784"/>
<dbReference type="PATRIC" id="fig|388919.9.peg.1692"/>
<dbReference type="eggNOG" id="COG0796">
    <property type="taxonomic scope" value="Bacteria"/>
</dbReference>
<dbReference type="HOGENOM" id="CLU_052344_0_2_9"/>
<dbReference type="OrthoDB" id="9801055at2"/>
<dbReference type="UniPathway" id="UPA00219"/>
<dbReference type="Proteomes" id="UP000002148">
    <property type="component" value="Chromosome"/>
</dbReference>
<dbReference type="GO" id="GO:0008881">
    <property type="term" value="F:glutamate racemase activity"/>
    <property type="evidence" value="ECO:0007669"/>
    <property type="project" value="UniProtKB-UniRule"/>
</dbReference>
<dbReference type="GO" id="GO:0071555">
    <property type="term" value="P:cell wall organization"/>
    <property type="evidence" value="ECO:0007669"/>
    <property type="project" value="UniProtKB-KW"/>
</dbReference>
<dbReference type="GO" id="GO:0009252">
    <property type="term" value="P:peptidoglycan biosynthetic process"/>
    <property type="evidence" value="ECO:0007669"/>
    <property type="project" value="UniProtKB-UniRule"/>
</dbReference>
<dbReference type="GO" id="GO:0008360">
    <property type="term" value="P:regulation of cell shape"/>
    <property type="evidence" value="ECO:0007669"/>
    <property type="project" value="UniProtKB-KW"/>
</dbReference>
<dbReference type="FunFam" id="3.40.50.1860:FF:000002">
    <property type="entry name" value="Glutamate racemase"/>
    <property type="match status" value="1"/>
</dbReference>
<dbReference type="Gene3D" id="3.40.50.1860">
    <property type="match status" value="2"/>
</dbReference>
<dbReference type="HAMAP" id="MF_00258">
    <property type="entry name" value="Glu_racemase"/>
    <property type="match status" value="1"/>
</dbReference>
<dbReference type="InterPro" id="IPR015942">
    <property type="entry name" value="Asp/Glu/hydantoin_racemase"/>
</dbReference>
<dbReference type="InterPro" id="IPR001920">
    <property type="entry name" value="Asp/Glu_race"/>
</dbReference>
<dbReference type="InterPro" id="IPR018187">
    <property type="entry name" value="Asp/Glu_racemase_AS_1"/>
</dbReference>
<dbReference type="InterPro" id="IPR033134">
    <property type="entry name" value="Asp/Glu_racemase_AS_2"/>
</dbReference>
<dbReference type="InterPro" id="IPR004391">
    <property type="entry name" value="Glu_race"/>
</dbReference>
<dbReference type="NCBIfam" id="TIGR00067">
    <property type="entry name" value="glut_race"/>
    <property type="match status" value="1"/>
</dbReference>
<dbReference type="NCBIfam" id="NF002035">
    <property type="entry name" value="PRK00865.1-3"/>
    <property type="match status" value="1"/>
</dbReference>
<dbReference type="PANTHER" id="PTHR21198">
    <property type="entry name" value="GLUTAMATE RACEMASE"/>
    <property type="match status" value="1"/>
</dbReference>
<dbReference type="PANTHER" id="PTHR21198:SF2">
    <property type="entry name" value="GLUTAMATE RACEMASE"/>
    <property type="match status" value="1"/>
</dbReference>
<dbReference type="Pfam" id="PF01177">
    <property type="entry name" value="Asp_Glu_race"/>
    <property type="match status" value="1"/>
</dbReference>
<dbReference type="SUPFAM" id="SSF53681">
    <property type="entry name" value="Aspartate/glutamate racemase"/>
    <property type="match status" value="2"/>
</dbReference>
<dbReference type="PROSITE" id="PS00923">
    <property type="entry name" value="ASP_GLU_RACEMASE_1"/>
    <property type="match status" value="1"/>
</dbReference>
<dbReference type="PROSITE" id="PS00924">
    <property type="entry name" value="ASP_GLU_RACEMASE_2"/>
    <property type="match status" value="1"/>
</dbReference>
<organism>
    <name type="scientific">Streptococcus sanguinis (strain SK36)</name>
    <dbReference type="NCBI Taxonomy" id="388919"/>
    <lineage>
        <taxon>Bacteria</taxon>
        <taxon>Bacillati</taxon>
        <taxon>Bacillota</taxon>
        <taxon>Bacilli</taxon>
        <taxon>Lactobacillales</taxon>
        <taxon>Streptococcaceae</taxon>
        <taxon>Streptococcus</taxon>
    </lineage>
</organism>
<reference key="1">
    <citation type="journal article" date="2007" name="J. Bacteriol.">
        <title>Genome of the opportunistic pathogen Streptococcus sanguinis.</title>
        <authorList>
            <person name="Xu P."/>
            <person name="Alves J.M."/>
            <person name="Kitten T."/>
            <person name="Brown A."/>
            <person name="Chen Z."/>
            <person name="Ozaki L.S."/>
            <person name="Manque P."/>
            <person name="Ge X."/>
            <person name="Serrano M.G."/>
            <person name="Puiu D."/>
            <person name="Hendricks S."/>
            <person name="Wang Y."/>
            <person name="Chaplin M.D."/>
            <person name="Akan D."/>
            <person name="Paik S."/>
            <person name="Peterson D.L."/>
            <person name="Macrina F.L."/>
            <person name="Buck G.A."/>
        </authorList>
    </citation>
    <scope>NUCLEOTIDE SEQUENCE [LARGE SCALE GENOMIC DNA]</scope>
    <source>
        <strain>SK36</strain>
    </source>
</reference>